<feature type="chain" id="PRO_1000121526" description="Imidazolonepropionase">
    <location>
        <begin position="1"/>
        <end position="407"/>
    </location>
</feature>
<feature type="binding site" evidence="1">
    <location>
        <position position="72"/>
    </location>
    <ligand>
        <name>Fe(3+)</name>
        <dbReference type="ChEBI" id="CHEBI:29034"/>
    </ligand>
</feature>
<feature type="binding site" evidence="1">
    <location>
        <position position="72"/>
    </location>
    <ligand>
        <name>Zn(2+)</name>
        <dbReference type="ChEBI" id="CHEBI:29105"/>
    </ligand>
</feature>
<feature type="binding site" evidence="1">
    <location>
        <position position="74"/>
    </location>
    <ligand>
        <name>Fe(3+)</name>
        <dbReference type="ChEBI" id="CHEBI:29034"/>
    </ligand>
</feature>
<feature type="binding site" evidence="1">
    <location>
        <position position="74"/>
    </location>
    <ligand>
        <name>Zn(2+)</name>
        <dbReference type="ChEBI" id="CHEBI:29105"/>
    </ligand>
</feature>
<feature type="binding site" evidence="1">
    <location>
        <position position="81"/>
    </location>
    <ligand>
        <name>4-imidazolone-5-propanoate</name>
        <dbReference type="ChEBI" id="CHEBI:77893"/>
    </ligand>
</feature>
<feature type="binding site" evidence="1">
    <location>
        <position position="144"/>
    </location>
    <ligand>
        <name>4-imidazolone-5-propanoate</name>
        <dbReference type="ChEBI" id="CHEBI:77893"/>
    </ligand>
</feature>
<feature type="binding site" evidence="1">
    <location>
        <position position="144"/>
    </location>
    <ligand>
        <name>N-formimidoyl-L-glutamate</name>
        <dbReference type="ChEBI" id="CHEBI:58928"/>
    </ligand>
</feature>
<feature type="binding site" evidence="1">
    <location>
        <position position="177"/>
    </location>
    <ligand>
        <name>4-imidazolone-5-propanoate</name>
        <dbReference type="ChEBI" id="CHEBI:77893"/>
    </ligand>
</feature>
<feature type="binding site" evidence="1">
    <location>
        <position position="242"/>
    </location>
    <ligand>
        <name>Fe(3+)</name>
        <dbReference type="ChEBI" id="CHEBI:29034"/>
    </ligand>
</feature>
<feature type="binding site" evidence="1">
    <location>
        <position position="242"/>
    </location>
    <ligand>
        <name>Zn(2+)</name>
        <dbReference type="ChEBI" id="CHEBI:29105"/>
    </ligand>
</feature>
<feature type="binding site" evidence="1">
    <location>
        <position position="245"/>
    </location>
    <ligand>
        <name>4-imidazolone-5-propanoate</name>
        <dbReference type="ChEBI" id="CHEBI:77893"/>
    </ligand>
</feature>
<feature type="binding site" evidence="1">
    <location>
        <position position="317"/>
    </location>
    <ligand>
        <name>Fe(3+)</name>
        <dbReference type="ChEBI" id="CHEBI:29034"/>
    </ligand>
</feature>
<feature type="binding site" evidence="1">
    <location>
        <position position="317"/>
    </location>
    <ligand>
        <name>Zn(2+)</name>
        <dbReference type="ChEBI" id="CHEBI:29105"/>
    </ligand>
</feature>
<feature type="binding site" evidence="1">
    <location>
        <position position="319"/>
    </location>
    <ligand>
        <name>N-formimidoyl-L-glutamate</name>
        <dbReference type="ChEBI" id="CHEBI:58928"/>
    </ligand>
</feature>
<feature type="binding site" evidence="1">
    <location>
        <position position="321"/>
    </location>
    <ligand>
        <name>N-formimidoyl-L-glutamate</name>
        <dbReference type="ChEBI" id="CHEBI:58928"/>
    </ligand>
</feature>
<feature type="binding site" evidence="1">
    <location>
        <position position="322"/>
    </location>
    <ligand>
        <name>4-imidazolone-5-propanoate</name>
        <dbReference type="ChEBI" id="CHEBI:77893"/>
    </ligand>
</feature>
<evidence type="ECO:0000255" key="1">
    <source>
        <dbReference type="HAMAP-Rule" id="MF_00372"/>
    </source>
</evidence>
<dbReference type="EC" id="3.5.2.7" evidence="1"/>
<dbReference type="EMBL" id="FM178380">
    <property type="protein sequence ID" value="CAQ81459.1"/>
    <property type="molecule type" value="Genomic_DNA"/>
</dbReference>
<dbReference type="RefSeq" id="WP_012552009.1">
    <property type="nucleotide sequence ID" value="NC_011313.1"/>
</dbReference>
<dbReference type="SMR" id="B6ERX5"/>
<dbReference type="KEGG" id="vsa:VSAL_II0705"/>
<dbReference type="eggNOG" id="COG1228">
    <property type="taxonomic scope" value="Bacteria"/>
</dbReference>
<dbReference type="HOGENOM" id="CLU_041647_0_0_6"/>
<dbReference type="UniPathway" id="UPA00379">
    <property type="reaction ID" value="UER00551"/>
</dbReference>
<dbReference type="Proteomes" id="UP000001730">
    <property type="component" value="Chromosome 2"/>
</dbReference>
<dbReference type="GO" id="GO:0005737">
    <property type="term" value="C:cytoplasm"/>
    <property type="evidence" value="ECO:0007669"/>
    <property type="project" value="UniProtKB-SubCell"/>
</dbReference>
<dbReference type="GO" id="GO:0050480">
    <property type="term" value="F:imidazolonepropionase activity"/>
    <property type="evidence" value="ECO:0007669"/>
    <property type="project" value="UniProtKB-UniRule"/>
</dbReference>
<dbReference type="GO" id="GO:0005506">
    <property type="term" value="F:iron ion binding"/>
    <property type="evidence" value="ECO:0007669"/>
    <property type="project" value="UniProtKB-UniRule"/>
</dbReference>
<dbReference type="GO" id="GO:0008270">
    <property type="term" value="F:zinc ion binding"/>
    <property type="evidence" value="ECO:0007669"/>
    <property type="project" value="UniProtKB-UniRule"/>
</dbReference>
<dbReference type="GO" id="GO:0019556">
    <property type="term" value="P:L-histidine catabolic process to glutamate and formamide"/>
    <property type="evidence" value="ECO:0007669"/>
    <property type="project" value="UniProtKB-UniPathway"/>
</dbReference>
<dbReference type="GO" id="GO:0019557">
    <property type="term" value="P:L-histidine catabolic process to glutamate and formate"/>
    <property type="evidence" value="ECO:0007669"/>
    <property type="project" value="UniProtKB-UniPathway"/>
</dbReference>
<dbReference type="CDD" id="cd01296">
    <property type="entry name" value="Imidazolone-5PH"/>
    <property type="match status" value="1"/>
</dbReference>
<dbReference type="FunFam" id="3.20.20.140:FF:000007">
    <property type="entry name" value="Imidazolonepropionase"/>
    <property type="match status" value="1"/>
</dbReference>
<dbReference type="Gene3D" id="3.20.20.140">
    <property type="entry name" value="Metal-dependent hydrolases"/>
    <property type="match status" value="1"/>
</dbReference>
<dbReference type="Gene3D" id="2.30.40.10">
    <property type="entry name" value="Urease, subunit C, domain 1"/>
    <property type="match status" value="1"/>
</dbReference>
<dbReference type="HAMAP" id="MF_00372">
    <property type="entry name" value="HutI"/>
    <property type="match status" value="1"/>
</dbReference>
<dbReference type="InterPro" id="IPR006680">
    <property type="entry name" value="Amidohydro-rel"/>
</dbReference>
<dbReference type="InterPro" id="IPR005920">
    <property type="entry name" value="HutI"/>
</dbReference>
<dbReference type="InterPro" id="IPR011059">
    <property type="entry name" value="Metal-dep_hydrolase_composite"/>
</dbReference>
<dbReference type="InterPro" id="IPR032466">
    <property type="entry name" value="Metal_Hydrolase"/>
</dbReference>
<dbReference type="NCBIfam" id="TIGR01224">
    <property type="entry name" value="hutI"/>
    <property type="match status" value="1"/>
</dbReference>
<dbReference type="PANTHER" id="PTHR42752">
    <property type="entry name" value="IMIDAZOLONEPROPIONASE"/>
    <property type="match status" value="1"/>
</dbReference>
<dbReference type="PANTHER" id="PTHR42752:SF1">
    <property type="entry name" value="IMIDAZOLONEPROPIONASE-RELATED"/>
    <property type="match status" value="1"/>
</dbReference>
<dbReference type="Pfam" id="PF01979">
    <property type="entry name" value="Amidohydro_1"/>
    <property type="match status" value="1"/>
</dbReference>
<dbReference type="SUPFAM" id="SSF51338">
    <property type="entry name" value="Composite domain of metallo-dependent hydrolases"/>
    <property type="match status" value="1"/>
</dbReference>
<dbReference type="SUPFAM" id="SSF51556">
    <property type="entry name" value="Metallo-dependent hydrolases"/>
    <property type="match status" value="1"/>
</dbReference>
<name>HUTI_ALISL</name>
<proteinExistence type="inferred from homology"/>
<accession>B6ERX5</accession>
<reference key="1">
    <citation type="journal article" date="2008" name="BMC Genomics">
        <title>The genome sequence of the fish pathogen Aliivibrio salmonicida strain LFI1238 shows extensive evidence of gene decay.</title>
        <authorList>
            <person name="Hjerde E."/>
            <person name="Lorentzen M.S."/>
            <person name="Holden M.T."/>
            <person name="Seeger K."/>
            <person name="Paulsen S."/>
            <person name="Bason N."/>
            <person name="Churcher C."/>
            <person name="Harris D."/>
            <person name="Norbertczak H."/>
            <person name="Quail M.A."/>
            <person name="Sanders S."/>
            <person name="Thurston S."/>
            <person name="Parkhill J."/>
            <person name="Willassen N.P."/>
            <person name="Thomson N.R."/>
        </authorList>
    </citation>
    <scope>NUCLEOTIDE SEQUENCE [LARGE SCALE GENOMIC DNA]</scope>
    <source>
        <strain>LFI1238</strain>
    </source>
</reference>
<organism>
    <name type="scientific">Aliivibrio salmonicida (strain LFI1238)</name>
    <name type="common">Vibrio salmonicida (strain LFI1238)</name>
    <dbReference type="NCBI Taxonomy" id="316275"/>
    <lineage>
        <taxon>Bacteria</taxon>
        <taxon>Pseudomonadati</taxon>
        <taxon>Pseudomonadota</taxon>
        <taxon>Gammaproteobacteria</taxon>
        <taxon>Vibrionales</taxon>
        <taxon>Vibrionaceae</taxon>
        <taxon>Aliivibrio</taxon>
    </lineage>
</organism>
<sequence length="407" mass="44531">MDRIFTNLNLVTMKTDLSTPNDGYQIIQDAMIGVTNGKVEYVGHSCPEIFHGHPDVIDCGNALVTPGFIDCHTHLIFAGNRANEFEQRLQGVPYQDIARQGGGILSTVNATRQASEDELYHLAVQRLEGLKRDGVTTVEIKSGYGLTLYDELKMLRVAKRIAKLPDMKVSSTLLAAHALPPEYKDKPDDYITLICDSIIPTVAEQKLADHVDVFCEGIGFSVEQCQRVFDAALTHELGIKGHTEQLSNLGGSALAASMGADSVDHIEYLDEDGVKSLAKHNTVATLLPGAFYFLRETQLPPIDLLRKHHVPMAISTDFNPGTSPIASLRMMMNMACTLFRLTPEEALRGVTCNAAQALGLQSSRGQISVGMEADFALWQLDSPAELSYRLGVPDLIARVVDGDVFYN</sequence>
<protein>
    <recommendedName>
        <fullName evidence="1">Imidazolonepropionase</fullName>
        <ecNumber evidence="1">3.5.2.7</ecNumber>
    </recommendedName>
    <alternativeName>
        <fullName evidence="1">Imidazolone-5-propionate hydrolase</fullName>
    </alternativeName>
</protein>
<comment type="function">
    <text evidence="1">Catalyzes the hydrolytic cleavage of the carbon-nitrogen bond in imidazolone-5-propanoate to yield N-formimidoyl-L-glutamate. It is the third step in the universal histidine degradation pathway.</text>
</comment>
<comment type="catalytic activity">
    <reaction evidence="1">
        <text>4-imidazolone-5-propanoate + H2O = N-formimidoyl-L-glutamate</text>
        <dbReference type="Rhea" id="RHEA:23660"/>
        <dbReference type="ChEBI" id="CHEBI:15377"/>
        <dbReference type="ChEBI" id="CHEBI:58928"/>
        <dbReference type="ChEBI" id="CHEBI:77893"/>
        <dbReference type="EC" id="3.5.2.7"/>
    </reaction>
</comment>
<comment type="cofactor">
    <cofactor evidence="1">
        <name>Zn(2+)</name>
        <dbReference type="ChEBI" id="CHEBI:29105"/>
    </cofactor>
    <cofactor evidence="1">
        <name>Fe(3+)</name>
        <dbReference type="ChEBI" id="CHEBI:29034"/>
    </cofactor>
    <text evidence="1">Binds 1 zinc or iron ion per subunit.</text>
</comment>
<comment type="pathway">
    <text evidence="1">Amino-acid degradation; L-histidine degradation into L-glutamate; N-formimidoyl-L-glutamate from L-histidine: step 3/3.</text>
</comment>
<comment type="subcellular location">
    <subcellularLocation>
        <location evidence="1">Cytoplasm</location>
    </subcellularLocation>
</comment>
<comment type="similarity">
    <text evidence="1">Belongs to the metallo-dependent hydrolases superfamily. HutI family.</text>
</comment>
<keyword id="KW-0963">Cytoplasm</keyword>
<keyword id="KW-0369">Histidine metabolism</keyword>
<keyword id="KW-0378">Hydrolase</keyword>
<keyword id="KW-0408">Iron</keyword>
<keyword id="KW-0479">Metal-binding</keyword>
<keyword id="KW-0862">Zinc</keyword>
<gene>
    <name evidence="1" type="primary">hutI</name>
    <name type="ordered locus">VSAL_II0705</name>
</gene>